<reference key="1">
    <citation type="submission" date="2008-06" db="EMBL/GenBank/DDBJ databases">
        <title>Complete sequence of Pelodictyon phaeoclathratiforme BU-1.</title>
        <authorList>
            <consortium name="US DOE Joint Genome Institute"/>
            <person name="Lucas S."/>
            <person name="Copeland A."/>
            <person name="Lapidus A."/>
            <person name="Glavina del Rio T."/>
            <person name="Dalin E."/>
            <person name="Tice H."/>
            <person name="Bruce D."/>
            <person name="Goodwin L."/>
            <person name="Pitluck S."/>
            <person name="Schmutz J."/>
            <person name="Larimer F."/>
            <person name="Land M."/>
            <person name="Hauser L."/>
            <person name="Kyrpides N."/>
            <person name="Mikhailova N."/>
            <person name="Liu Z."/>
            <person name="Li T."/>
            <person name="Zhao F."/>
            <person name="Overmann J."/>
            <person name="Bryant D.A."/>
            <person name="Richardson P."/>
        </authorList>
    </citation>
    <scope>NUCLEOTIDE SEQUENCE [LARGE SCALE GENOMIC DNA]</scope>
    <source>
        <strain>DSM 5477 / BU-1</strain>
    </source>
</reference>
<accession>B4SH30</accession>
<comment type="function">
    <text evidence="1">Transaldolase is important for the balance of metabolites in the pentose-phosphate pathway.</text>
</comment>
<comment type="catalytic activity">
    <reaction evidence="1">
        <text>D-sedoheptulose 7-phosphate + D-glyceraldehyde 3-phosphate = D-erythrose 4-phosphate + beta-D-fructose 6-phosphate</text>
        <dbReference type="Rhea" id="RHEA:17053"/>
        <dbReference type="ChEBI" id="CHEBI:16897"/>
        <dbReference type="ChEBI" id="CHEBI:57483"/>
        <dbReference type="ChEBI" id="CHEBI:57634"/>
        <dbReference type="ChEBI" id="CHEBI:59776"/>
        <dbReference type="EC" id="2.2.1.2"/>
    </reaction>
</comment>
<comment type="pathway">
    <text evidence="1">Carbohydrate degradation; pentose phosphate pathway; D-glyceraldehyde 3-phosphate and beta-D-fructose 6-phosphate from D-ribose 5-phosphate and D-xylulose 5-phosphate (non-oxidative stage): step 2/3.</text>
</comment>
<comment type="subcellular location">
    <subcellularLocation>
        <location evidence="1">Cytoplasm</location>
    </subcellularLocation>
</comment>
<comment type="similarity">
    <text evidence="1">Belongs to the transaldolase family. Type 3B subfamily.</text>
</comment>
<evidence type="ECO:0000255" key="1">
    <source>
        <dbReference type="HAMAP-Rule" id="MF_00494"/>
    </source>
</evidence>
<proteinExistence type="inferred from homology"/>
<organism>
    <name type="scientific">Pelodictyon phaeoclathratiforme (strain DSM 5477 / BU-1)</name>
    <dbReference type="NCBI Taxonomy" id="324925"/>
    <lineage>
        <taxon>Bacteria</taxon>
        <taxon>Pseudomonadati</taxon>
        <taxon>Chlorobiota</taxon>
        <taxon>Chlorobiia</taxon>
        <taxon>Chlorobiales</taxon>
        <taxon>Chlorobiaceae</taxon>
        <taxon>Chlorobium/Pelodictyon group</taxon>
        <taxon>Pelodictyon</taxon>
    </lineage>
</organism>
<sequence>MKFFIDTANLDEILAAAELGVLDGVTTNPSLIAKIVGDPSNFTYNDFKAHIARICEIVDGPVSAEVTCLTAEEMIAEGEDLAAIHENVVVKCPLTIDGLKAIQHFSLNGIRTNATLVFSPNQALLAAKAGADYVSPFVGRLDDISTDGMELVKQIVTIYNNYGYPTEVIVASVRHPQHVVTAAMMGADIATIPYSVIKQLANHPLTDAGLKKFMDDAAVMKK</sequence>
<keyword id="KW-0963">Cytoplasm</keyword>
<keyword id="KW-0570">Pentose shunt</keyword>
<keyword id="KW-1185">Reference proteome</keyword>
<keyword id="KW-0704">Schiff base</keyword>
<keyword id="KW-0808">Transferase</keyword>
<dbReference type="EC" id="2.2.1.2" evidence="1"/>
<dbReference type="EMBL" id="CP001110">
    <property type="protein sequence ID" value="ACF45018.1"/>
    <property type="molecule type" value="Genomic_DNA"/>
</dbReference>
<dbReference type="RefSeq" id="WP_012509486.1">
    <property type="nucleotide sequence ID" value="NC_011060.1"/>
</dbReference>
<dbReference type="SMR" id="B4SH30"/>
<dbReference type="STRING" id="324925.Ppha_2875"/>
<dbReference type="KEGG" id="pph:Ppha_2875"/>
<dbReference type="eggNOG" id="COG0176">
    <property type="taxonomic scope" value="Bacteria"/>
</dbReference>
<dbReference type="HOGENOM" id="CLU_079764_0_0_10"/>
<dbReference type="OrthoDB" id="9807051at2"/>
<dbReference type="UniPathway" id="UPA00115">
    <property type="reaction ID" value="UER00414"/>
</dbReference>
<dbReference type="Proteomes" id="UP000002724">
    <property type="component" value="Chromosome"/>
</dbReference>
<dbReference type="GO" id="GO:0005737">
    <property type="term" value="C:cytoplasm"/>
    <property type="evidence" value="ECO:0007669"/>
    <property type="project" value="UniProtKB-SubCell"/>
</dbReference>
<dbReference type="GO" id="GO:0016832">
    <property type="term" value="F:aldehyde-lyase activity"/>
    <property type="evidence" value="ECO:0007669"/>
    <property type="project" value="InterPro"/>
</dbReference>
<dbReference type="GO" id="GO:0004801">
    <property type="term" value="F:transaldolase activity"/>
    <property type="evidence" value="ECO:0007669"/>
    <property type="project" value="UniProtKB-UniRule"/>
</dbReference>
<dbReference type="GO" id="GO:0005975">
    <property type="term" value="P:carbohydrate metabolic process"/>
    <property type="evidence" value="ECO:0007669"/>
    <property type="project" value="InterPro"/>
</dbReference>
<dbReference type="GO" id="GO:0006098">
    <property type="term" value="P:pentose-phosphate shunt"/>
    <property type="evidence" value="ECO:0007669"/>
    <property type="project" value="UniProtKB-UniRule"/>
</dbReference>
<dbReference type="CDD" id="cd00956">
    <property type="entry name" value="Transaldolase_FSA"/>
    <property type="match status" value="1"/>
</dbReference>
<dbReference type="FunFam" id="3.20.20.70:FF:000018">
    <property type="entry name" value="Probable transaldolase"/>
    <property type="match status" value="1"/>
</dbReference>
<dbReference type="Gene3D" id="3.20.20.70">
    <property type="entry name" value="Aldolase class I"/>
    <property type="match status" value="1"/>
</dbReference>
<dbReference type="HAMAP" id="MF_00494">
    <property type="entry name" value="Transaldolase_3b"/>
    <property type="match status" value="1"/>
</dbReference>
<dbReference type="InterPro" id="IPR013785">
    <property type="entry name" value="Aldolase_TIM"/>
</dbReference>
<dbReference type="InterPro" id="IPR001585">
    <property type="entry name" value="TAL/FSA"/>
</dbReference>
<dbReference type="InterPro" id="IPR022999">
    <property type="entry name" value="Transaldolase_3B"/>
</dbReference>
<dbReference type="InterPro" id="IPR004731">
    <property type="entry name" value="Transaldolase_3B/F6P_aldolase"/>
</dbReference>
<dbReference type="InterPro" id="IPR018225">
    <property type="entry name" value="Transaldolase_AS"/>
</dbReference>
<dbReference type="InterPro" id="IPR033919">
    <property type="entry name" value="TSA/FSA_arc/bac"/>
</dbReference>
<dbReference type="NCBIfam" id="TIGR00875">
    <property type="entry name" value="fsa_talC_mipB"/>
    <property type="match status" value="1"/>
</dbReference>
<dbReference type="PANTHER" id="PTHR10683:SF40">
    <property type="entry name" value="FRUCTOSE-6-PHOSPHATE ALDOLASE 1-RELATED"/>
    <property type="match status" value="1"/>
</dbReference>
<dbReference type="PANTHER" id="PTHR10683">
    <property type="entry name" value="TRANSALDOLASE"/>
    <property type="match status" value="1"/>
</dbReference>
<dbReference type="Pfam" id="PF00923">
    <property type="entry name" value="TAL_FSA"/>
    <property type="match status" value="1"/>
</dbReference>
<dbReference type="SUPFAM" id="SSF51569">
    <property type="entry name" value="Aldolase"/>
    <property type="match status" value="1"/>
</dbReference>
<dbReference type="PROSITE" id="PS01054">
    <property type="entry name" value="TRANSALDOLASE_1"/>
    <property type="match status" value="1"/>
</dbReference>
<name>TAL_PELPB</name>
<feature type="chain" id="PRO_1000126340" description="Probable transaldolase">
    <location>
        <begin position="1"/>
        <end position="222"/>
    </location>
</feature>
<feature type="active site" description="Schiff-base intermediate with substrate" evidence="1">
    <location>
        <position position="91"/>
    </location>
</feature>
<protein>
    <recommendedName>
        <fullName evidence="1">Probable transaldolase</fullName>
        <ecNumber evidence="1">2.2.1.2</ecNumber>
    </recommendedName>
</protein>
<gene>
    <name evidence="1" type="primary">tal</name>
    <name type="ordered locus">Ppha_2875</name>
</gene>